<gene>
    <name evidence="1" type="primary">rdgC</name>
    <name type="ordered locus">APJL_0162</name>
</gene>
<name>RDGC_ACTPJ</name>
<proteinExistence type="inferred from homology"/>
<reference key="1">
    <citation type="journal article" date="2008" name="PLoS ONE">
        <title>Genome biology of Actinobacillus pleuropneumoniae JL03, an isolate of serotype 3 prevalent in China.</title>
        <authorList>
            <person name="Xu Z."/>
            <person name="Zhou Y."/>
            <person name="Li L."/>
            <person name="Zhou R."/>
            <person name="Xiao S."/>
            <person name="Wan Y."/>
            <person name="Zhang S."/>
            <person name="Wang K."/>
            <person name="Li W."/>
            <person name="Li L."/>
            <person name="Jin H."/>
            <person name="Kang M."/>
            <person name="Dalai B."/>
            <person name="Li T."/>
            <person name="Liu L."/>
            <person name="Cheng Y."/>
            <person name="Zhang L."/>
            <person name="Xu T."/>
            <person name="Zheng H."/>
            <person name="Pu S."/>
            <person name="Wang B."/>
            <person name="Gu W."/>
            <person name="Zhang X.L."/>
            <person name="Zhu G.-F."/>
            <person name="Wang S."/>
            <person name="Zhao G.-P."/>
            <person name="Chen H."/>
        </authorList>
    </citation>
    <scope>NUCLEOTIDE SEQUENCE [LARGE SCALE GENOMIC DNA]</scope>
    <source>
        <strain>JL03</strain>
    </source>
</reference>
<keyword id="KW-0963">Cytoplasm</keyword>
<keyword id="KW-0233">DNA recombination</keyword>
<protein>
    <recommendedName>
        <fullName evidence="1">Recombination-associated protein RdgC</fullName>
    </recommendedName>
</protein>
<feature type="chain" id="PRO_1000099054" description="Recombination-associated protein RdgC">
    <location>
        <begin position="1"/>
        <end position="302"/>
    </location>
</feature>
<organism>
    <name type="scientific">Actinobacillus pleuropneumoniae serotype 3 (strain JL03)</name>
    <dbReference type="NCBI Taxonomy" id="434271"/>
    <lineage>
        <taxon>Bacteria</taxon>
        <taxon>Pseudomonadati</taxon>
        <taxon>Pseudomonadota</taxon>
        <taxon>Gammaproteobacteria</taxon>
        <taxon>Pasteurellales</taxon>
        <taxon>Pasteurellaceae</taxon>
        <taxon>Actinobacillus</taxon>
    </lineage>
</organism>
<accession>B0BS66</accession>
<dbReference type="EMBL" id="CP000687">
    <property type="protein sequence ID" value="ABY68766.1"/>
    <property type="molecule type" value="Genomic_DNA"/>
</dbReference>
<dbReference type="RefSeq" id="WP_012262719.1">
    <property type="nucleotide sequence ID" value="NC_010278.1"/>
</dbReference>
<dbReference type="SMR" id="B0BS66"/>
<dbReference type="KEGG" id="apj:APJL_0162"/>
<dbReference type="HOGENOM" id="CLU_052038_1_1_6"/>
<dbReference type="Proteomes" id="UP000008547">
    <property type="component" value="Chromosome"/>
</dbReference>
<dbReference type="GO" id="GO:0043590">
    <property type="term" value="C:bacterial nucleoid"/>
    <property type="evidence" value="ECO:0007669"/>
    <property type="project" value="TreeGrafter"/>
</dbReference>
<dbReference type="GO" id="GO:0005737">
    <property type="term" value="C:cytoplasm"/>
    <property type="evidence" value="ECO:0007669"/>
    <property type="project" value="UniProtKB-UniRule"/>
</dbReference>
<dbReference type="GO" id="GO:0003690">
    <property type="term" value="F:double-stranded DNA binding"/>
    <property type="evidence" value="ECO:0007669"/>
    <property type="project" value="TreeGrafter"/>
</dbReference>
<dbReference type="GO" id="GO:0006310">
    <property type="term" value="P:DNA recombination"/>
    <property type="evidence" value="ECO:0007669"/>
    <property type="project" value="UniProtKB-UniRule"/>
</dbReference>
<dbReference type="GO" id="GO:0000018">
    <property type="term" value="P:regulation of DNA recombination"/>
    <property type="evidence" value="ECO:0007669"/>
    <property type="project" value="TreeGrafter"/>
</dbReference>
<dbReference type="HAMAP" id="MF_00194">
    <property type="entry name" value="RdgC"/>
    <property type="match status" value="1"/>
</dbReference>
<dbReference type="InterPro" id="IPR007476">
    <property type="entry name" value="RdgC"/>
</dbReference>
<dbReference type="NCBIfam" id="NF001462">
    <property type="entry name" value="PRK00321.1-3"/>
    <property type="match status" value="1"/>
</dbReference>
<dbReference type="NCBIfam" id="NF001464">
    <property type="entry name" value="PRK00321.1-5"/>
    <property type="match status" value="1"/>
</dbReference>
<dbReference type="PANTHER" id="PTHR38103">
    <property type="entry name" value="RECOMBINATION-ASSOCIATED PROTEIN RDGC"/>
    <property type="match status" value="1"/>
</dbReference>
<dbReference type="PANTHER" id="PTHR38103:SF1">
    <property type="entry name" value="RECOMBINATION-ASSOCIATED PROTEIN RDGC"/>
    <property type="match status" value="1"/>
</dbReference>
<dbReference type="Pfam" id="PF04381">
    <property type="entry name" value="RdgC"/>
    <property type="match status" value="1"/>
</dbReference>
<comment type="function">
    <text evidence="1">May be involved in recombination.</text>
</comment>
<comment type="subcellular location">
    <subcellularLocation>
        <location evidence="1">Cytoplasm</location>
        <location evidence="1">Nucleoid</location>
    </subcellularLocation>
</comment>
<comment type="similarity">
    <text evidence="1">Belongs to the RdgC family.</text>
</comment>
<evidence type="ECO:0000255" key="1">
    <source>
        <dbReference type="HAMAP-Rule" id="MF_00194"/>
    </source>
</evidence>
<sequence length="302" mass="34598">MFWFKNVMIYRLTSPLSLESSSLEEQLQQAKFTPCSQSDMSKFGWSSPLSGSELLHFSQGKQFLLVSHKEDKLLPANVIKKETEERIAVLEEKEARKLKKTEKQAIKDDVVAMLLPRAFSKHQFTAIWLDLDAQLVYVDAGSSKRAEDTLALLRKTLGSLPVVPISFALLPSEVMTNWIAKGHTPNWLNLLEEAELKSFDTDSVIRCKRQDLESEEIAQHLQAGKFVTKLAIDWENHFSCVLNEDATLSRVKFADEVREKNDDILKEDIAQRFDADFLLMTEELKLFTQKMIEEFGGIKERI</sequence>